<dbReference type="EC" id="6.3.2.-" evidence="7 10"/>
<dbReference type="EMBL" id="AM690752">
    <property type="protein sequence ID" value="CAM84329.1"/>
    <property type="molecule type" value="mRNA"/>
</dbReference>
<dbReference type="EMBL" id="AK030151">
    <property type="protein sequence ID" value="BAC26811.1"/>
    <property type="status" value="ALT_INIT"/>
    <property type="molecule type" value="mRNA"/>
</dbReference>
<dbReference type="EMBL" id="BC116293">
    <property type="protein sequence ID" value="AAI16294.1"/>
    <property type="status" value="ALT_INIT"/>
    <property type="molecule type" value="mRNA"/>
</dbReference>
<dbReference type="EMBL" id="BC116294">
    <property type="protein sequence ID" value="AAI16295.1"/>
    <property type="status" value="ALT_FRAME"/>
    <property type="molecule type" value="mRNA"/>
</dbReference>
<dbReference type="RefSeq" id="NP_766406.2">
    <property type="nucleotide sequence ID" value="NM_172818.3"/>
</dbReference>
<dbReference type="RefSeq" id="XP_006521019.1">
    <property type="nucleotide sequence ID" value="XM_006520956.3"/>
</dbReference>
<dbReference type="RefSeq" id="XP_006521020.1">
    <property type="nucleotide sequence ID" value="XM_006520957.2"/>
</dbReference>
<dbReference type="SMR" id="A4Q9F1"/>
<dbReference type="FunCoup" id="A4Q9F1">
    <property type="interactions" value="49"/>
</dbReference>
<dbReference type="STRING" id="10090.ENSMUSP00000104996"/>
<dbReference type="GlyGen" id="A4Q9F1">
    <property type="glycosylation" value="1 site"/>
</dbReference>
<dbReference type="iPTMnet" id="A4Q9F1"/>
<dbReference type="PhosphoSitePlus" id="A4Q9F1"/>
<dbReference type="PaxDb" id="10090-ENSMUSP00000104996"/>
<dbReference type="ProteomicsDB" id="297755"/>
<dbReference type="Antibodypedia" id="28278">
    <property type="antibodies" value="39 antibodies from 10 providers"/>
</dbReference>
<dbReference type="DNASU" id="239591"/>
<dbReference type="Ensembl" id="ENSMUST00000109371.8">
    <property type="protein sequence ID" value="ENSMUSP00000104996.2"/>
    <property type="gene ID" value="ENSMUSG00000022388.15"/>
</dbReference>
<dbReference type="GeneID" id="239591"/>
<dbReference type="KEGG" id="mmu:239591"/>
<dbReference type="UCSC" id="uc007xet.2">
    <property type="organism name" value="mouse"/>
</dbReference>
<dbReference type="AGR" id="MGI:1922902"/>
<dbReference type="CTD" id="164714"/>
<dbReference type="MGI" id="MGI:1922902">
    <property type="gene designation" value="Ttll8"/>
</dbReference>
<dbReference type="VEuPathDB" id="HostDB:ENSMUSG00000022388"/>
<dbReference type="eggNOG" id="KOG2157">
    <property type="taxonomic scope" value="Eukaryota"/>
</dbReference>
<dbReference type="GeneTree" id="ENSGT00940000162265"/>
<dbReference type="HOGENOM" id="CLU_010131_5_4_1"/>
<dbReference type="InParanoid" id="A4Q9F1"/>
<dbReference type="OMA" id="DDIHNVM"/>
<dbReference type="OrthoDB" id="202825at2759"/>
<dbReference type="PhylomeDB" id="A4Q9F1"/>
<dbReference type="TreeFam" id="TF313087"/>
<dbReference type="Reactome" id="R-MMU-8955332">
    <property type="pathway name" value="Carboxyterminal post-translational modifications of tubulin"/>
</dbReference>
<dbReference type="BioGRID-ORCS" id="239591">
    <property type="hits" value="4 hits in 76 CRISPR screens"/>
</dbReference>
<dbReference type="ChiTaRS" id="Ttll8">
    <property type="organism name" value="mouse"/>
</dbReference>
<dbReference type="PRO" id="PR:A4Q9F1"/>
<dbReference type="Proteomes" id="UP000000589">
    <property type="component" value="Chromosome 15"/>
</dbReference>
<dbReference type="RNAct" id="A4Q9F1">
    <property type="molecule type" value="protein"/>
</dbReference>
<dbReference type="Bgee" id="ENSMUSG00000022388">
    <property type="expression patterns" value="Expressed in testis and 15 other cell types or tissues"/>
</dbReference>
<dbReference type="ExpressionAtlas" id="A4Q9F1">
    <property type="expression patterns" value="baseline and differential"/>
</dbReference>
<dbReference type="GO" id="GO:0005930">
    <property type="term" value="C:axoneme"/>
    <property type="evidence" value="ECO:0000314"/>
    <property type="project" value="UniProtKB"/>
</dbReference>
<dbReference type="GO" id="GO:0005929">
    <property type="term" value="C:cilium"/>
    <property type="evidence" value="ECO:0000314"/>
    <property type="project" value="UniProtKB"/>
</dbReference>
<dbReference type="GO" id="GO:0005874">
    <property type="term" value="C:microtubule"/>
    <property type="evidence" value="ECO:0007669"/>
    <property type="project" value="UniProtKB-KW"/>
</dbReference>
<dbReference type="GO" id="GO:0015630">
    <property type="term" value="C:microtubule cytoskeleton"/>
    <property type="evidence" value="ECO:0000314"/>
    <property type="project" value="UniProtKB"/>
</dbReference>
<dbReference type="GO" id="GO:0036126">
    <property type="term" value="C:sperm flagellum"/>
    <property type="evidence" value="ECO:0000314"/>
    <property type="project" value="UniProtKB"/>
</dbReference>
<dbReference type="GO" id="GO:0005524">
    <property type="term" value="F:ATP binding"/>
    <property type="evidence" value="ECO:0007669"/>
    <property type="project" value="UniProtKB-KW"/>
</dbReference>
<dbReference type="GO" id="GO:0046872">
    <property type="term" value="F:metal ion binding"/>
    <property type="evidence" value="ECO:0007669"/>
    <property type="project" value="UniProtKB-KW"/>
</dbReference>
<dbReference type="GO" id="GO:0070735">
    <property type="term" value="F:protein-glycine ligase activity"/>
    <property type="evidence" value="ECO:0000314"/>
    <property type="project" value="UniProtKB"/>
</dbReference>
<dbReference type="GO" id="GO:0070736">
    <property type="term" value="F:protein-glycine ligase activity, initiating"/>
    <property type="evidence" value="ECO:0000314"/>
    <property type="project" value="UniProtKB"/>
</dbReference>
<dbReference type="GO" id="GO:0060271">
    <property type="term" value="P:cilium assembly"/>
    <property type="evidence" value="ECO:0000315"/>
    <property type="project" value="MGI"/>
</dbReference>
<dbReference type="GO" id="GO:0030317">
    <property type="term" value="P:flagellated sperm motility"/>
    <property type="evidence" value="ECO:0000315"/>
    <property type="project" value="UniProtKB"/>
</dbReference>
<dbReference type="GO" id="GO:0018094">
    <property type="term" value="P:protein polyglycylation"/>
    <property type="evidence" value="ECO:0000314"/>
    <property type="project" value="UniProtKB"/>
</dbReference>
<dbReference type="FunFam" id="3.30.470.20:FF:000032">
    <property type="entry name" value="tubulin monoglycylase TTLL3 isoform X2"/>
    <property type="match status" value="1"/>
</dbReference>
<dbReference type="Gene3D" id="3.30.470.20">
    <property type="entry name" value="ATP-grasp fold, B domain"/>
    <property type="match status" value="1"/>
</dbReference>
<dbReference type="InterPro" id="IPR004344">
    <property type="entry name" value="TTL/TTLL_fam"/>
</dbReference>
<dbReference type="InterPro" id="IPR051437">
    <property type="entry name" value="TTLL_monoglycylase"/>
</dbReference>
<dbReference type="PANTHER" id="PTHR45870:SF3">
    <property type="entry name" value="PROTEIN MONOGLYCYLASE TTLL8"/>
    <property type="match status" value="1"/>
</dbReference>
<dbReference type="PANTHER" id="PTHR45870">
    <property type="entry name" value="TUBULIN MONOGLYCYLASE TTLL3"/>
    <property type="match status" value="1"/>
</dbReference>
<dbReference type="Pfam" id="PF03133">
    <property type="entry name" value="TTL"/>
    <property type="match status" value="1"/>
</dbReference>
<dbReference type="SUPFAM" id="SSF56059">
    <property type="entry name" value="Glutathione synthetase ATP-binding domain-like"/>
    <property type="match status" value="1"/>
</dbReference>
<dbReference type="PROSITE" id="PS51221">
    <property type="entry name" value="TTL"/>
    <property type="match status" value="1"/>
</dbReference>
<sequence length="832" mass="94915">MSCPPTPNPPFRPPSHTRVLRTPPLPPWVCLNSKSLSTGVGGQKNQLREASMENGERKKLSSTLSDGDHKEENKLKQGIPQDLSSSPKLDRYKIARQLTEKAIKERKIFSIYGHYPVIRATLRRKGWVEKKFNFFPKALQNLGSEDKSAETKENQEIALERFDDIHDVMSRLVKNEIPYLLWTIKRDVVDYHSLTCDQMLNHYGKTASFTTKIGLCLNMRSLPWYVQANPNTFFPRCYGLCTESEKQEFLDDFRRTVAASILKWVVLHQNYCSKVKGKSKKEEAKNSDPSPKKDPENPDLKLPSLSGQVVDTACKVCQAYLGQLEHEDIDVSEASTEALSEEEWNDLTQQYYLLVHGNASITDSKSYFAQCQALLSKISSVNPQTEIDGIRNIWIIKPAAKSRGRDIVCMDRVENILSLVAADSQTTKDNKWVVQKYIETPMLIYDTKFDIRQWFLVTDWNPLTIWFYKESYLRFSTQRFSLDKLDSAIHLCNNSIQRRLKNDKERSPLLPCHNMWTSTRFQEYLQKRGRGGTWGSIIYPSMKRAVTNAMRVAQDHVEARKNSFELYGADFILGRDFKPWLIEINSSPTMHPSTPVTAQLCAQVQEDTIKVVVDRKLDRNCDIGNFELLWRQPAVELPPFNGSDLCVEGISVKKAKKQMPPIASVGLSESLLDAPPKVRSARALMETVIRPPRTTVRQDWKREEAKVLSTTWSMPVMDAEVRGRAKPIYAFEVNDYQHVDNKSHKSGYTRVQSSKVPGVTLTSAQHPALFAQTMKPTQMTSSPPPTASGNHRDSSPFCPIVFEELWLHPNSQRRPSSCILQSRAQGWIRGIP</sequence>
<evidence type="ECO:0000250" key="1">
    <source>
        <dbReference type="UniProtKB" id="A4Q9E8"/>
    </source>
</evidence>
<evidence type="ECO:0000250" key="2">
    <source>
        <dbReference type="UniProtKB" id="B2GUB3"/>
    </source>
</evidence>
<evidence type="ECO:0000255" key="3">
    <source>
        <dbReference type="PROSITE-ProRule" id="PRU00568"/>
    </source>
</evidence>
<evidence type="ECO:0000256" key="4">
    <source>
        <dbReference type="SAM" id="MobiDB-lite"/>
    </source>
</evidence>
<evidence type="ECO:0000269" key="5">
    <source>
    </source>
</evidence>
<evidence type="ECO:0000269" key="6">
    <source>
    </source>
</evidence>
<evidence type="ECO:0000269" key="7">
    <source>
    </source>
</evidence>
<evidence type="ECO:0000269" key="8">
    <source>
    </source>
</evidence>
<evidence type="ECO:0000269" key="9">
    <source>
    </source>
</evidence>
<evidence type="ECO:0000269" key="10">
    <source>
    </source>
</evidence>
<evidence type="ECO:0000269" key="11">
    <source>
    </source>
</evidence>
<evidence type="ECO:0000303" key="12">
    <source>
    </source>
</evidence>
<evidence type="ECO:0000305" key="13"/>
<evidence type="ECO:0000305" key="14">
    <source>
    </source>
</evidence>
<evidence type="ECO:0000305" key="15">
    <source>
    </source>
</evidence>
<evidence type="ECO:0000312" key="16">
    <source>
        <dbReference type="EMBL" id="BAC26811.1"/>
    </source>
</evidence>
<evidence type="ECO:0000312" key="17">
    <source>
        <dbReference type="EMBL" id="CAM84329.1"/>
    </source>
</evidence>
<protein>
    <recommendedName>
        <fullName evidence="12">Protein monoglycylase TTLL8</fullName>
        <ecNumber evidence="7 10">6.3.2.-</ecNumber>
    </recommendedName>
    <alternativeName>
        <fullName evidence="12">Tubulin--tyrosine ligase-like protein 8</fullName>
    </alternativeName>
</protein>
<keyword id="KW-0067">ATP-binding</keyword>
<keyword id="KW-0966">Cell projection</keyword>
<keyword id="KW-0969">Cilium</keyword>
<keyword id="KW-0963">Cytoplasm</keyword>
<keyword id="KW-0206">Cytoskeleton</keyword>
<keyword id="KW-0282">Flagellum</keyword>
<keyword id="KW-0436">Ligase</keyword>
<keyword id="KW-0460">Magnesium</keyword>
<keyword id="KW-0479">Metal-binding</keyword>
<keyword id="KW-0493">Microtubule</keyword>
<keyword id="KW-0547">Nucleotide-binding</keyword>
<keyword id="KW-1185">Reference proteome</keyword>
<gene>
    <name evidence="17" type="primary">Ttll8</name>
</gene>
<comment type="function">
    <text evidence="6 7 8 9 10 11">Monoglycylase which modifies both tubulin and non-tubulin proteins, adding a single glycine on the gamma-carboxyl groups of specific glutamate residues to generate monoglycine side chains within the C-terminal tail of target proteins (PubMed:19524510, PubMed:28576883). Not involved in elongation step of the polyglycylation reaction (PubMed:19524510). Preferentially monoglycylates alpha-tubulin over beta-tubulin (PubMed:19524510). Together with TTLL3, mediates microtubule glycylation of primary and motile cilia, which is essential for their stability and maintenance (PubMed:19524510, PubMed:23897886, PubMed:25180231). Together with TTLL3, glycylates sperm flagella which regulates axonemal dynein motor activity, thereby controlling flagellar beat, directional sperm swimming and male fertility (PubMed:33414192). Monoglycylates non-tubulin proteins such as ANP32A, ANP32B, SET, NCL and NAP1 (PubMed:19427864, PubMed:19524510).</text>
</comment>
<comment type="catalytic activity">
    <reaction evidence="7 10">
        <text>L-glutamyl-[protein] + glycine + ATP = glycyl-L-glutamyl-[protein] + ADP + phosphate + H(+)</text>
        <dbReference type="Rhea" id="RHEA:67180"/>
        <dbReference type="Rhea" id="RHEA-COMP:10208"/>
        <dbReference type="Rhea" id="RHEA-COMP:17207"/>
        <dbReference type="ChEBI" id="CHEBI:15378"/>
        <dbReference type="ChEBI" id="CHEBI:29973"/>
        <dbReference type="ChEBI" id="CHEBI:30616"/>
        <dbReference type="ChEBI" id="CHEBI:43474"/>
        <dbReference type="ChEBI" id="CHEBI:57305"/>
        <dbReference type="ChEBI" id="CHEBI:167890"/>
        <dbReference type="ChEBI" id="CHEBI:456216"/>
    </reaction>
    <physiologicalReaction direction="left-to-right" evidence="14 15">
        <dbReference type="Rhea" id="RHEA:67181"/>
    </physiologicalReaction>
</comment>
<comment type="cofactor">
    <cofactor evidence="1">
        <name>Mg(2+)</name>
        <dbReference type="ChEBI" id="CHEBI:18420"/>
    </cofactor>
</comment>
<comment type="subcellular location">
    <subcellularLocation>
        <location evidence="6 7 11">Cytoplasm</location>
        <location evidence="6 7 11">Cytoskeleton</location>
    </subcellularLocation>
    <subcellularLocation>
        <location evidence="14">Cell projection</location>
        <location evidence="14">Cilium</location>
    </subcellularLocation>
    <subcellularLocation>
        <location evidence="14">Cytoplasm</location>
        <location evidence="14">Cytoskeleton</location>
        <location evidence="14">Cilium axoneme</location>
    </subcellularLocation>
    <subcellularLocation>
        <location evidence="11">Cytoplasm</location>
        <location evidence="11">Cytoskeleton</location>
        <location evidence="11">Flagellum axoneme</location>
    </subcellularLocation>
</comment>
<comment type="tissue specificity">
    <text evidence="5 8 9 11">Highly expressed in testis (PubMed:17499049, PubMed:25180231). Expressed in brain, heart, kidney, liver, lung, muscle, spleen and trachea (PubMed:17499049, PubMed:25180231, PubMed:33414192). Expressed in sperm flagellum (PubMed:33414192). In the brain, specifically expressed in ependymal cilia (PubMed:23897886).</text>
</comment>
<comment type="domain">
    <text evidence="10">Two conserved structural elements specific among monoglycylases, IS1 and IS2, are involved in glycyl chains initiation. Two conserved structural interfaces likely constitute the binding platforms for tubulin tail and microtubule.</text>
</comment>
<comment type="domain">
    <text evidence="1">Arg-403 is the main determinant for regioselectivity, which segregates between initiases and elongases in all tubulin--tyrosine ligase family. A glutamine residue at this position is found in elongases TTLL6, TTLL9, TTLL11, TTLL13, TTLL10 and favors glutamate-chain elongation, whereas an arginine residue is found in initiases TTLL2, TTLL4, TTLL5, TTLL3, TTLL8 and favors initiation.</text>
</comment>
<comment type="disruption phenotype">
    <text evidence="11">Simultaneous TTLL3 and TTLL8 knockout mice are subfertile owing to aberrant beat patterns of their sperm flagella, which impeded the straight swimming of sperm cells.</text>
</comment>
<comment type="caution">
    <text evidence="8 11">TTLL3 and TTLL8 monoglycylase-mediated glycylation of tubulin was initially reported to play a role in ependymal motile ciliary maintenance (PubMed:23897886). However, contradictory results were later observed (PubMed:33414192).</text>
</comment>
<comment type="sequence caution" evidence="13">
    <conflict type="erroneous initiation">
        <sequence resource="EMBL-CDS" id="AAI16294"/>
    </conflict>
</comment>
<comment type="sequence caution" evidence="13">
    <conflict type="frameshift">
        <sequence resource="EMBL-CDS" id="AAI16295"/>
    </conflict>
</comment>
<comment type="sequence caution" evidence="13">
    <conflict type="erroneous initiation">
        <sequence resource="EMBL-CDS" id="BAC26811"/>
    </conflict>
</comment>
<feature type="chain" id="PRO_0000326164" description="Protein monoglycylase TTLL8">
    <location>
        <begin position="1"/>
        <end position="832"/>
    </location>
</feature>
<feature type="domain" description="TTL" evidence="3">
    <location>
        <begin position="271"/>
        <end position="624"/>
    </location>
</feature>
<feature type="region of interest" description="Disordered" evidence="4">
    <location>
        <begin position="1"/>
        <end position="84"/>
    </location>
</feature>
<feature type="region of interest" description="Disordered" evidence="4">
    <location>
        <begin position="277"/>
        <end position="304"/>
    </location>
</feature>
<feature type="compositionally biased region" description="Pro residues" evidence="4">
    <location>
        <begin position="1"/>
        <end position="13"/>
    </location>
</feature>
<feature type="compositionally biased region" description="Basic and acidic residues" evidence="4">
    <location>
        <begin position="46"/>
        <end position="59"/>
    </location>
</feature>
<feature type="compositionally biased region" description="Basic and acidic residues" evidence="4">
    <location>
        <begin position="66"/>
        <end position="75"/>
    </location>
</feature>
<feature type="compositionally biased region" description="Basic and acidic residues" evidence="4">
    <location>
        <begin position="280"/>
        <end position="299"/>
    </location>
</feature>
<feature type="binding site" evidence="1">
    <location>
        <position position="397"/>
    </location>
    <ligand>
        <name>ATP</name>
        <dbReference type="ChEBI" id="CHEBI:30616"/>
    </ligand>
</feature>
<feature type="binding site" evidence="1">
    <location>
        <begin position="403"/>
        <end position="404"/>
    </location>
    <ligand>
        <name>ATP</name>
        <dbReference type="ChEBI" id="CHEBI:30616"/>
    </ligand>
</feature>
<feature type="binding site" evidence="1">
    <location>
        <position position="403"/>
    </location>
    <ligand>
        <name>a protein</name>
        <dbReference type="ChEBI" id="CHEBI:16541"/>
    </ligand>
    <ligandPart>
        <name>L-glutamate residue</name>
        <dbReference type="ChEBI" id="CHEBI:29973"/>
        <note>L-glutamate acceptor residue in protein target</note>
    </ligandPart>
</feature>
<feature type="binding site" evidence="2">
    <location>
        <begin position="435"/>
        <end position="438"/>
    </location>
    <ligand>
        <name>ATP</name>
        <dbReference type="ChEBI" id="CHEBI:30616"/>
    </ligand>
</feature>
<feature type="binding site" evidence="1">
    <location>
        <begin position="448"/>
        <end position="450"/>
    </location>
    <ligand>
        <name>ATP</name>
        <dbReference type="ChEBI" id="CHEBI:30616"/>
    </ligand>
</feature>
<feature type="binding site" evidence="1">
    <location>
        <begin position="492"/>
        <end position="493"/>
    </location>
    <ligand>
        <name>ATP</name>
        <dbReference type="ChEBI" id="CHEBI:30616"/>
    </ligand>
</feature>
<feature type="binding site" evidence="1">
    <location>
        <position position="495"/>
    </location>
    <ligand>
        <name>L-glutamate</name>
        <dbReference type="ChEBI" id="CHEBI:29985"/>
    </ligand>
</feature>
<feature type="binding site" evidence="1">
    <location>
        <position position="570"/>
    </location>
    <ligand>
        <name>Mg(2+)</name>
        <dbReference type="ChEBI" id="CHEBI:18420"/>
        <label>1</label>
    </ligand>
</feature>
<feature type="binding site" evidence="2">
    <location>
        <position position="583"/>
    </location>
    <ligand>
        <name>ATP</name>
        <dbReference type="ChEBI" id="CHEBI:30616"/>
    </ligand>
</feature>
<feature type="binding site" evidence="1">
    <location>
        <position position="583"/>
    </location>
    <ligand>
        <name>Mg(2+)</name>
        <dbReference type="ChEBI" id="CHEBI:18420"/>
        <label>1</label>
    </ligand>
</feature>
<feature type="binding site" evidence="1">
    <location>
        <position position="583"/>
    </location>
    <ligand>
        <name>Mg(2+)</name>
        <dbReference type="ChEBI" id="CHEBI:18420"/>
        <label>2</label>
    </ligand>
</feature>
<feature type="binding site" evidence="1">
    <location>
        <position position="585"/>
    </location>
    <ligand>
        <name>Mg(2+)</name>
        <dbReference type="ChEBI" id="CHEBI:18420"/>
        <label>2</label>
    </ligand>
</feature>
<feature type="site" description="Essential for specifying initiation versus elongation step of the polyglycylase activity" evidence="1">
    <location>
        <position position="403"/>
    </location>
</feature>
<feature type="mutagenesis site" description="Decreased monoglycylation activity; when associated with E-96." evidence="10">
    <original>K</original>
    <variation>E</variation>
    <location>
        <position position="93"/>
    </location>
</feature>
<feature type="mutagenesis site" description="Decreased monoglycylation activity; when associated with E-93." evidence="10">
    <original>R</original>
    <variation>E</variation>
    <location>
        <position position="96"/>
    </location>
</feature>
<feature type="mutagenesis site" description="Decreased monoglycylation activity; when associated with E-106." evidence="10">
    <original>K</original>
    <variation>E</variation>
    <location>
        <position position="104"/>
    </location>
</feature>
<feature type="mutagenesis site" description="Decreased monoglycylation activity; when associated with E-104." evidence="10">
    <original>R</original>
    <variation>E</variation>
    <location>
        <position position="106"/>
    </location>
</feature>
<feature type="mutagenesis site" description="Decreased monoglycylation activity." evidence="10">
    <original>K</original>
    <variation>E</variation>
    <location>
        <position position="185"/>
    </location>
</feature>
<feature type="mutagenesis site" description="Decreased monoglycylation activity." evidence="10">
    <original>H</original>
    <variation>E</variation>
    <location>
        <position position="192"/>
    </location>
</feature>
<feature type="mutagenesis site" description="Decreased monoglycylation activity." evidence="10">
    <original>K</original>
    <variation>E</variation>
    <location>
        <position position="205"/>
    </location>
</feature>
<feature type="mutagenesis site" description="Decreased monoglycylation activity." evidence="10">
    <original>W</original>
    <variation>A</variation>
    <location>
        <position position="224"/>
    </location>
</feature>
<feature type="mutagenesis site" description="Decreased monoglycylation activity." evidence="10">
    <original>Y</original>
    <variation>A</variation>
    <location>
        <position position="225"/>
    </location>
</feature>
<feature type="mutagenesis site" description="Decreased monoglycylation activity; when associated with N-330." evidence="10">
    <original>D</original>
    <variation>N</variation>
    <location>
        <position position="328"/>
    </location>
</feature>
<feature type="mutagenesis site" description="Decreased monoglycylation activity; when associated with N-328." evidence="10">
    <original>D</original>
    <variation>N</variation>
    <location>
        <position position="330"/>
    </location>
</feature>
<feature type="mutagenesis site" description="Decreased monoglycylation activity." evidence="10">
    <original>R</original>
    <variation>E</variation>
    <location>
        <position position="619"/>
    </location>
</feature>
<feature type="mutagenesis site" description="Decreased monoglycylation activity." evidence="10">
    <original>R</original>
    <variation>E</variation>
    <location>
        <position position="631"/>
    </location>
</feature>
<organism>
    <name type="scientific">Mus musculus</name>
    <name type="common">Mouse</name>
    <dbReference type="NCBI Taxonomy" id="10090"/>
    <lineage>
        <taxon>Eukaryota</taxon>
        <taxon>Metazoa</taxon>
        <taxon>Chordata</taxon>
        <taxon>Craniata</taxon>
        <taxon>Vertebrata</taxon>
        <taxon>Euteleostomi</taxon>
        <taxon>Mammalia</taxon>
        <taxon>Eutheria</taxon>
        <taxon>Euarchontoglires</taxon>
        <taxon>Glires</taxon>
        <taxon>Rodentia</taxon>
        <taxon>Myomorpha</taxon>
        <taxon>Muroidea</taxon>
        <taxon>Muridae</taxon>
        <taxon>Murinae</taxon>
        <taxon>Mus</taxon>
        <taxon>Mus</taxon>
    </lineage>
</organism>
<accession>A4Q9F1</accession>
<accession>Q14B76</accession>
<accession>Q8C0N7</accession>
<proteinExistence type="evidence at protein level"/>
<name>TTLL8_MOUSE</name>
<reference key="1">
    <citation type="journal article" date="2007" name="Mol. Cell">
        <title>A targeted multienzyme mechanism for selective microtubule polyglutamylation.</title>
        <authorList>
            <person name="van Dijk J."/>
            <person name="Rogowski K."/>
            <person name="Miro J."/>
            <person name="Lacroix B."/>
            <person name="Edde B."/>
            <person name="Janke C."/>
        </authorList>
    </citation>
    <scope>NUCLEOTIDE SEQUENCE [MRNA]</scope>
    <scope>TISSUE SPECIFICITY</scope>
    <source>
        <strain evidence="17">C57BL/6J</strain>
        <tissue evidence="17">Testis</tissue>
    </source>
</reference>
<reference key="2">
    <citation type="journal article" date="2005" name="Science">
        <title>The transcriptional landscape of the mammalian genome.</title>
        <authorList>
            <person name="Carninci P."/>
            <person name="Kasukawa T."/>
            <person name="Katayama S."/>
            <person name="Gough J."/>
            <person name="Frith M.C."/>
            <person name="Maeda N."/>
            <person name="Oyama R."/>
            <person name="Ravasi T."/>
            <person name="Lenhard B."/>
            <person name="Wells C."/>
            <person name="Kodzius R."/>
            <person name="Shimokawa K."/>
            <person name="Bajic V.B."/>
            <person name="Brenner S.E."/>
            <person name="Batalov S."/>
            <person name="Forrest A.R."/>
            <person name="Zavolan M."/>
            <person name="Davis M.J."/>
            <person name="Wilming L.G."/>
            <person name="Aidinis V."/>
            <person name="Allen J.E."/>
            <person name="Ambesi-Impiombato A."/>
            <person name="Apweiler R."/>
            <person name="Aturaliya R.N."/>
            <person name="Bailey T.L."/>
            <person name="Bansal M."/>
            <person name="Baxter L."/>
            <person name="Beisel K.W."/>
            <person name="Bersano T."/>
            <person name="Bono H."/>
            <person name="Chalk A.M."/>
            <person name="Chiu K.P."/>
            <person name="Choudhary V."/>
            <person name="Christoffels A."/>
            <person name="Clutterbuck D.R."/>
            <person name="Crowe M.L."/>
            <person name="Dalla E."/>
            <person name="Dalrymple B.P."/>
            <person name="de Bono B."/>
            <person name="Della Gatta G."/>
            <person name="di Bernardo D."/>
            <person name="Down T."/>
            <person name="Engstrom P."/>
            <person name="Fagiolini M."/>
            <person name="Faulkner G."/>
            <person name="Fletcher C.F."/>
            <person name="Fukushima T."/>
            <person name="Furuno M."/>
            <person name="Futaki S."/>
            <person name="Gariboldi M."/>
            <person name="Georgii-Hemming P."/>
            <person name="Gingeras T.R."/>
            <person name="Gojobori T."/>
            <person name="Green R.E."/>
            <person name="Gustincich S."/>
            <person name="Harbers M."/>
            <person name="Hayashi Y."/>
            <person name="Hensch T.K."/>
            <person name="Hirokawa N."/>
            <person name="Hill D."/>
            <person name="Huminiecki L."/>
            <person name="Iacono M."/>
            <person name="Ikeo K."/>
            <person name="Iwama A."/>
            <person name="Ishikawa T."/>
            <person name="Jakt M."/>
            <person name="Kanapin A."/>
            <person name="Katoh M."/>
            <person name="Kawasawa Y."/>
            <person name="Kelso J."/>
            <person name="Kitamura H."/>
            <person name="Kitano H."/>
            <person name="Kollias G."/>
            <person name="Krishnan S.P."/>
            <person name="Kruger A."/>
            <person name="Kummerfeld S.K."/>
            <person name="Kurochkin I.V."/>
            <person name="Lareau L.F."/>
            <person name="Lazarevic D."/>
            <person name="Lipovich L."/>
            <person name="Liu J."/>
            <person name="Liuni S."/>
            <person name="McWilliam S."/>
            <person name="Madan Babu M."/>
            <person name="Madera M."/>
            <person name="Marchionni L."/>
            <person name="Matsuda H."/>
            <person name="Matsuzawa S."/>
            <person name="Miki H."/>
            <person name="Mignone F."/>
            <person name="Miyake S."/>
            <person name="Morris K."/>
            <person name="Mottagui-Tabar S."/>
            <person name="Mulder N."/>
            <person name="Nakano N."/>
            <person name="Nakauchi H."/>
            <person name="Ng P."/>
            <person name="Nilsson R."/>
            <person name="Nishiguchi S."/>
            <person name="Nishikawa S."/>
            <person name="Nori F."/>
            <person name="Ohara O."/>
            <person name="Okazaki Y."/>
            <person name="Orlando V."/>
            <person name="Pang K.C."/>
            <person name="Pavan W.J."/>
            <person name="Pavesi G."/>
            <person name="Pesole G."/>
            <person name="Petrovsky N."/>
            <person name="Piazza S."/>
            <person name="Reed J."/>
            <person name="Reid J.F."/>
            <person name="Ring B.Z."/>
            <person name="Ringwald M."/>
            <person name="Rost B."/>
            <person name="Ruan Y."/>
            <person name="Salzberg S.L."/>
            <person name="Sandelin A."/>
            <person name="Schneider C."/>
            <person name="Schoenbach C."/>
            <person name="Sekiguchi K."/>
            <person name="Semple C.A."/>
            <person name="Seno S."/>
            <person name="Sessa L."/>
            <person name="Sheng Y."/>
            <person name="Shibata Y."/>
            <person name="Shimada H."/>
            <person name="Shimada K."/>
            <person name="Silva D."/>
            <person name="Sinclair B."/>
            <person name="Sperling S."/>
            <person name="Stupka E."/>
            <person name="Sugiura K."/>
            <person name="Sultana R."/>
            <person name="Takenaka Y."/>
            <person name="Taki K."/>
            <person name="Tammoja K."/>
            <person name="Tan S.L."/>
            <person name="Tang S."/>
            <person name="Taylor M.S."/>
            <person name="Tegner J."/>
            <person name="Teichmann S.A."/>
            <person name="Ueda H.R."/>
            <person name="van Nimwegen E."/>
            <person name="Verardo R."/>
            <person name="Wei C.L."/>
            <person name="Yagi K."/>
            <person name="Yamanishi H."/>
            <person name="Zabarovsky E."/>
            <person name="Zhu S."/>
            <person name="Zimmer A."/>
            <person name="Hide W."/>
            <person name="Bult C."/>
            <person name="Grimmond S.M."/>
            <person name="Teasdale R.D."/>
            <person name="Liu E.T."/>
            <person name="Brusic V."/>
            <person name="Quackenbush J."/>
            <person name="Wahlestedt C."/>
            <person name="Mattick J.S."/>
            <person name="Hume D.A."/>
            <person name="Kai C."/>
            <person name="Sasaki D."/>
            <person name="Tomaru Y."/>
            <person name="Fukuda S."/>
            <person name="Kanamori-Katayama M."/>
            <person name="Suzuki M."/>
            <person name="Aoki J."/>
            <person name="Arakawa T."/>
            <person name="Iida J."/>
            <person name="Imamura K."/>
            <person name="Itoh M."/>
            <person name="Kato T."/>
            <person name="Kawaji H."/>
            <person name="Kawagashira N."/>
            <person name="Kawashima T."/>
            <person name="Kojima M."/>
            <person name="Kondo S."/>
            <person name="Konno H."/>
            <person name="Nakano K."/>
            <person name="Ninomiya N."/>
            <person name="Nishio T."/>
            <person name="Okada M."/>
            <person name="Plessy C."/>
            <person name="Shibata K."/>
            <person name="Shiraki T."/>
            <person name="Suzuki S."/>
            <person name="Tagami M."/>
            <person name="Waki K."/>
            <person name="Watahiki A."/>
            <person name="Okamura-Oho Y."/>
            <person name="Suzuki H."/>
            <person name="Kawai J."/>
            <person name="Hayashizaki Y."/>
        </authorList>
    </citation>
    <scope>NUCLEOTIDE SEQUENCE [LARGE SCALE MRNA]</scope>
    <source>
        <strain evidence="16">C57BL/6J</strain>
        <tissue evidence="16">Testis</tissue>
    </source>
</reference>
<reference key="3">
    <citation type="journal article" date="2004" name="Genome Res.">
        <title>The status, quality, and expansion of the NIH full-length cDNA project: the Mammalian Gene Collection (MGC).</title>
        <authorList>
            <consortium name="The MGC Project Team"/>
        </authorList>
    </citation>
    <scope>NUCLEOTIDE SEQUENCE [LARGE SCALE MRNA] OF 7-832</scope>
</reference>
<reference key="4">
    <citation type="journal article" date="2009" name="Cell">
        <title>Evolutionary divergence of enzymatic mechanisms for posttranslational polyglycylation.</title>
        <authorList>
            <person name="Rogowski K."/>
            <person name="Juge F."/>
            <person name="van Dijk J."/>
            <person name="Wloga D."/>
            <person name="Strub J.-M."/>
            <person name="Levilliers N."/>
            <person name="Thomas D."/>
            <person name="Bre M.-H."/>
            <person name="Van Dorsselaer A."/>
            <person name="Gaertig J."/>
            <person name="Janke C."/>
        </authorList>
    </citation>
    <scope>FUNCTION</scope>
    <scope>CATALYTIC ACTIVITY</scope>
    <scope>SUBCELLULAR LOCATION</scope>
</reference>
<reference key="5">
    <citation type="journal article" date="2009" name="FEBS Lett.">
        <title>TTLL10 can perform tubulin glycylation when co-expressed with TTLL8.</title>
        <authorList>
            <person name="Ikegami K."/>
            <person name="Setou M."/>
        </authorList>
    </citation>
    <scope>FUNCTION</scope>
    <scope>SUBCELLULAR LOCATION</scope>
</reference>
<reference key="6">
    <citation type="journal article" date="2013" name="J. Cell Biol.">
        <title>Tubulin glycylases and glutamylases have distinct functions in stabilization and motility of ependymal cilia.</title>
        <authorList>
            <person name="Bosch Grau M."/>
            <person name="Gonzalez Curto G."/>
            <person name="Rocha C."/>
            <person name="Magiera M.M."/>
            <person name="Marques Sousa P."/>
            <person name="Giordano T."/>
            <person name="Spassky N."/>
            <person name="Janke C."/>
        </authorList>
    </citation>
    <scope>FUNCTION</scope>
    <scope>TISSUE SPECIFICITY</scope>
</reference>
<reference key="7">
    <citation type="journal article" date="2014" name="EMBO J.">
        <title>Tubulin glycylases are required for primary cilia, control of cell proliferation and tumor development in colon.</title>
        <authorList>
            <person name="Rocha C."/>
            <person name="Papon L."/>
            <person name="Cacheux W."/>
            <person name="Marques Sousa P."/>
            <person name="Lascano V."/>
            <person name="Tort O."/>
            <person name="Giordano T."/>
            <person name="Vacher S."/>
            <person name="Lemmers B."/>
            <person name="Mariani P."/>
            <person name="Meseure D."/>
            <person name="Medema J.P."/>
            <person name="Bieche I."/>
            <person name="Hahne M."/>
            <person name="Janke C."/>
        </authorList>
    </citation>
    <scope>FUNCTION</scope>
    <scope>TISSUE SPECIFICITY</scope>
</reference>
<reference key="8">
    <citation type="journal article" date="2017" name="Proc. Natl. Acad. Sci. U.S.A.">
        <title>Crystal structure of tubulin tyrosine ligase-like 3 reveals essential architectural elements unique to tubulin monoglycylases.</title>
        <authorList>
            <person name="Garnham C.P."/>
            <person name="Yu I."/>
            <person name="Li Y."/>
            <person name="Roll-Mecak A."/>
        </authorList>
    </citation>
    <scope>FUNCTION</scope>
    <scope>CATALYTIC ACTIVITY</scope>
    <scope>MUTAGENESIS OF LYS-93; ARG-96; LYS-104; ARG-106; LYS-185; HIS-192; LYS-205; TRP-224; TYR-225; ASP-328; ASP-330; ARG-619 AND ARG-631</scope>
</reference>
<reference key="9">
    <citation type="journal article" date="2021" name="Science">
        <title>Tubulin glycylation controls axonemal dynein activity, flagellar beat, and male fertility.</title>
        <authorList>
            <person name="Gadadhar S."/>
            <person name="Alvarez Viar G."/>
            <person name="Hansen J.N."/>
            <person name="Gong A."/>
            <person name="Kostarev A."/>
            <person name="Ialy-Radio C."/>
            <person name="Leboucher S."/>
            <person name="Whitfield M."/>
            <person name="Ziyyat A."/>
            <person name="Toure A."/>
            <person name="Alvarez L."/>
            <person name="Pigino G."/>
            <person name="Janke C."/>
        </authorList>
    </citation>
    <scope>FUNCTION</scope>
    <scope>SUBCELLULAR LOCATION</scope>
    <scope>TISSUE SPECIFICITY</scope>
    <scope>DISRUPTION PHENOTYPE</scope>
</reference>